<dbReference type="EMBL" id="CM000160">
    <property type="protein sequence ID" value="EDW97503.1"/>
    <property type="molecule type" value="Genomic_DNA"/>
</dbReference>
<dbReference type="EnsemblMetazoa" id="FBtr0270793">
    <property type="protein sequence ID" value="FBpp0269285"/>
    <property type="gene ID" value="FBgn0241404"/>
</dbReference>
<dbReference type="EnsemblMetazoa" id="XM_002097755.4">
    <property type="protein sequence ID" value="XP_002097791.1"/>
    <property type="gene ID" value="LOC6537233"/>
</dbReference>
<dbReference type="GeneID" id="6537233"/>
<dbReference type="KEGG" id="dya:Dyak_GE24275"/>
<dbReference type="CTD" id="23383"/>
<dbReference type="eggNOG" id="KOG2300">
    <property type="taxonomic scope" value="Eukaryota"/>
</dbReference>
<dbReference type="HOGENOM" id="CLU_030238_0_0_1"/>
<dbReference type="OMA" id="QDAWYLS"/>
<dbReference type="OrthoDB" id="5565328at2759"/>
<dbReference type="PhylomeDB" id="B4PS83"/>
<dbReference type="Proteomes" id="UP000002282">
    <property type="component" value="Chromosome 3R"/>
</dbReference>
<dbReference type="GO" id="GO:0000785">
    <property type="term" value="C:chromatin"/>
    <property type="evidence" value="ECO:0000250"/>
    <property type="project" value="UniProtKB"/>
</dbReference>
<dbReference type="GO" id="GO:0005654">
    <property type="term" value="C:nucleoplasm"/>
    <property type="evidence" value="ECO:0000250"/>
    <property type="project" value="UniProtKB"/>
</dbReference>
<dbReference type="GO" id="GO:0005634">
    <property type="term" value="C:nucleus"/>
    <property type="evidence" value="ECO:0000250"/>
    <property type="project" value="UniProtKB"/>
</dbReference>
<dbReference type="GO" id="GO:0032116">
    <property type="term" value="C:SMC loading complex"/>
    <property type="evidence" value="ECO:0000250"/>
    <property type="project" value="UniProtKB"/>
</dbReference>
<dbReference type="GO" id="GO:0051301">
    <property type="term" value="P:cell division"/>
    <property type="evidence" value="ECO:0007669"/>
    <property type="project" value="UniProtKB-KW"/>
</dbReference>
<dbReference type="GO" id="GO:0007059">
    <property type="term" value="P:chromosome segregation"/>
    <property type="evidence" value="ECO:0007669"/>
    <property type="project" value="UniProtKB-KW"/>
</dbReference>
<dbReference type="GO" id="GO:0034088">
    <property type="term" value="P:maintenance of mitotic sister chromatid cohesion"/>
    <property type="evidence" value="ECO:0000250"/>
    <property type="project" value="UniProtKB"/>
</dbReference>
<dbReference type="FunFam" id="1.25.40.10:FF:000373">
    <property type="entry name" value="MAU2 chromatid cohesion factor homolog"/>
    <property type="match status" value="1"/>
</dbReference>
<dbReference type="FunFam" id="1.25.40.10:FF:000915">
    <property type="entry name" value="MAU2 chromatid cohesion factor homolog"/>
    <property type="match status" value="1"/>
</dbReference>
<dbReference type="Gene3D" id="1.25.40.10">
    <property type="entry name" value="Tetratricopeptide repeat domain"/>
    <property type="match status" value="2"/>
</dbReference>
<dbReference type="InterPro" id="IPR019440">
    <property type="entry name" value="MAU2"/>
</dbReference>
<dbReference type="InterPro" id="IPR011990">
    <property type="entry name" value="TPR-like_helical_dom_sf"/>
</dbReference>
<dbReference type="PANTHER" id="PTHR21394">
    <property type="entry name" value="MAU2 CHROMATID COHESION FACTOR HOMOLOG"/>
    <property type="match status" value="1"/>
</dbReference>
<dbReference type="Pfam" id="PF10345">
    <property type="entry name" value="Cohesin_load"/>
    <property type="match status" value="1"/>
</dbReference>
<dbReference type="SUPFAM" id="SSF48452">
    <property type="entry name" value="TPR-like"/>
    <property type="match status" value="1"/>
</dbReference>
<feature type="chain" id="PRO_0000382740" description="MAU2 chromatid cohesion factor homolog">
    <location>
        <begin position="1"/>
        <end position="632"/>
    </location>
</feature>
<feature type="repeat" description="TPR 1">
    <location>
        <begin position="453"/>
        <end position="486"/>
    </location>
</feature>
<feature type="repeat" description="TPR 2">
    <location>
        <begin position="493"/>
        <end position="526"/>
    </location>
</feature>
<comment type="function">
    <text evidence="1">Required for association of the cohesin complex with chromatin during interphase. Plays a role in sister chromatid cohesion and normal progression through prometaphase (By similarity).</text>
</comment>
<comment type="subunit">
    <text evidence="1">Interacts with Nipped-B to form the cohesin loading complex.</text>
</comment>
<comment type="subcellular location">
    <subcellularLocation>
        <location evidence="1">Nucleus</location>
        <location evidence="1">Nucleoplasm</location>
    </subcellularLocation>
    <text evidence="1">Binds to chromatin from the end of mitosis until prophase.</text>
</comment>
<comment type="similarity">
    <text evidence="2">Belongs to the SCC4/mau-2 family.</text>
</comment>
<organism>
    <name type="scientific">Drosophila yakuba</name>
    <name type="common">Fruit fly</name>
    <dbReference type="NCBI Taxonomy" id="7245"/>
    <lineage>
        <taxon>Eukaryota</taxon>
        <taxon>Metazoa</taxon>
        <taxon>Ecdysozoa</taxon>
        <taxon>Arthropoda</taxon>
        <taxon>Hexapoda</taxon>
        <taxon>Insecta</taxon>
        <taxon>Pterygota</taxon>
        <taxon>Neoptera</taxon>
        <taxon>Endopterygota</taxon>
        <taxon>Diptera</taxon>
        <taxon>Brachycera</taxon>
        <taxon>Muscomorpha</taxon>
        <taxon>Ephydroidea</taxon>
        <taxon>Drosophilidae</taxon>
        <taxon>Drosophila</taxon>
        <taxon>Sophophora</taxon>
    </lineage>
</organism>
<reference key="1">
    <citation type="journal article" date="2007" name="Nature">
        <title>Evolution of genes and genomes on the Drosophila phylogeny.</title>
        <authorList>
            <consortium name="Drosophila 12 genomes consortium"/>
        </authorList>
    </citation>
    <scope>NUCLEOTIDE SEQUENCE [LARGE SCALE GENOMIC DNA]</scope>
    <source>
        <strain>Tai18E2 / Tucson 14021-0261.01</strain>
    </source>
</reference>
<proteinExistence type="inferred from homology"/>
<evidence type="ECO:0000250" key="1"/>
<evidence type="ECO:0000305" key="2"/>
<protein>
    <recommendedName>
        <fullName>MAU2 chromatid cohesion factor homolog</fullName>
    </recommendedName>
    <alternativeName>
        <fullName>Cohesin loading complex subunit SCC4 homolog</fullName>
    </alternativeName>
</protein>
<sequence length="632" mass="71219">MSASTSTSTAASQDACYISLLGLAEYFRTSQPPNIKKCIQCLQALFTFMPPSKVEARTHLQMGQILMAYTKNIDLARQHLEKAWSISEPLPNFDVKFDTASLLAQLHLQTDKNSHQAKAMLRRAVELSQNNVYWHCKLLLQLAQIHASDREYSLASELLAVGAESADEASATYLKVLFLLSRAMILMIERKTNDVLALLNSAGQIIDNNIPNPHQKEYLKVFFLVLQVCYYLALGQVKTVKPSLKQLQMSIQTIMAPNWPSDEAIFGANQLEMFVWLPKEQLYVLVYLVTVSHSMMAGYMDKAQKYTEKALTQIEKLKQQEDKPILSVFKVILLEHIVMCRMVMGNRELAIREIAAARDVCMAAPQRTLLRRHSAQLHCLIGLYSMSTNLFEHAERQFVVCVSETSERDLKLFANLNLAIIYLRTKRDTDLKQILDAVSTENTHTYSSQALMGGFYYVQGLHAFHKNSFHEAKRFLRETLKMANAEDLNRLTSCSLVLLSHVFLSIGNSKESMNMVTPAMQLASKIPDIHVQLWGSAILKDLHRMSKDVQHEKDAYANHVKYSENLIADQRKCVQSAHHELVNWFQGDPPVTSGPPATPVLLMPESSVTSSVPVIASTSAAMQPAGQYGQFY</sequence>
<gene>
    <name type="ORF">GE24275</name>
</gene>
<accession>B4PS83</accession>
<name>SCC4_DROYA</name>
<keyword id="KW-0131">Cell cycle</keyword>
<keyword id="KW-0132">Cell division</keyword>
<keyword id="KW-0159">Chromosome partition</keyword>
<keyword id="KW-0498">Mitosis</keyword>
<keyword id="KW-0539">Nucleus</keyword>
<keyword id="KW-0677">Repeat</keyword>
<keyword id="KW-0802">TPR repeat</keyword>